<gene>
    <name type="primary">CHS</name>
</gene>
<keyword id="KW-0012">Acyltransferase</keyword>
<keyword id="KW-0284">Flavonoid biosynthesis</keyword>
<keyword id="KW-0808">Transferase</keyword>
<accession>P23569</accession>
<sequence length="389" mass="42832">MVSVAEIRQAQRAEGPATILAIGTANPPNCVDQSTYPDYYFRITNSEHMTELKEKFQRMCDKSMIKKRYMYLTEEILKENPNMCAYMAPSLDARQDMVVVEVPKLGKEAATKAIKEWGQPKSKITHLIFCTTSGVDMPGADYQLTKQLGLRPYVKRYMMYQQGCFAGGTVLRLAKDLAENNKGARVLVVCSEITAVTFRGPSDTHLDSLVGQALFGDGAAAVIVGSDPIPQVEKPLYELVWTAQTIAPDSEGAIDGHLREVGLTFHLLKDVPGIVSKNIDKALFEAFNPLNISDYNSIFWIAHPGGPAILDQVEQKLGLKPEKMKATRDVLSDYGNMSSACVLFILDEMRRKSAENGLKTTGEGLEWGVLFGFGPGLTIETVVLRSVAI</sequence>
<protein>
    <recommendedName>
        <fullName>Chalcone synthase</fullName>
        <ecNumber>2.3.1.74</ecNumber>
    </recommendedName>
    <alternativeName>
        <fullName>Naringenin-chalcone synthase</fullName>
    </alternativeName>
</protein>
<evidence type="ECO:0000255" key="1">
    <source>
        <dbReference type="PROSITE-ProRule" id="PRU10023"/>
    </source>
</evidence>
<evidence type="ECO:0000305" key="2"/>
<feature type="chain" id="PRO_0000216043" description="Chalcone synthase">
    <location>
        <begin position="1"/>
        <end position="389"/>
    </location>
</feature>
<feature type="active site" evidence="1">
    <location>
        <position position="164"/>
    </location>
</feature>
<comment type="function">
    <text>The primary product of this enzyme is 4,2',4',6'-tetrahydroxychalcone (also termed naringenin-chalcone or chalcone) which can under specific conditions spontaneously isomerize into naringenin.</text>
</comment>
<comment type="catalytic activity">
    <reaction evidence="1">
        <text>(E)-4-coumaroyl-CoA + 3 malonyl-CoA + 3 H(+) = 2',4,4',6'-tetrahydroxychalcone + 3 CO2 + 4 CoA</text>
        <dbReference type="Rhea" id="RHEA:11128"/>
        <dbReference type="ChEBI" id="CHEBI:15378"/>
        <dbReference type="ChEBI" id="CHEBI:15413"/>
        <dbReference type="ChEBI" id="CHEBI:16526"/>
        <dbReference type="ChEBI" id="CHEBI:57287"/>
        <dbReference type="ChEBI" id="CHEBI:57384"/>
        <dbReference type="ChEBI" id="CHEBI:85008"/>
        <dbReference type="EC" id="2.3.1.74"/>
    </reaction>
</comment>
<comment type="pathway">
    <text>Secondary metabolite biosynthesis; flavonoid biosynthesis.</text>
</comment>
<comment type="similarity">
    <text evidence="2">Belongs to the thiolase-like superfamily. Chalcone/stilbene synthases family.</text>
</comment>
<name>CHSY_PUEML</name>
<dbReference type="EC" id="2.3.1.74"/>
<dbReference type="EMBL" id="D10223">
    <property type="protein sequence ID" value="BAA01075.1"/>
    <property type="molecule type" value="mRNA"/>
</dbReference>
<dbReference type="EMBL" id="D63855">
    <property type="protein sequence ID" value="BAA09918.1"/>
    <property type="molecule type" value="Genomic_DNA"/>
</dbReference>
<dbReference type="PIR" id="JQ0911">
    <property type="entry name" value="SYFJCP"/>
</dbReference>
<dbReference type="SMR" id="P23569"/>
<dbReference type="UniPathway" id="UPA00154"/>
<dbReference type="GO" id="GO:0016210">
    <property type="term" value="F:naringenin-chalcone synthase activity"/>
    <property type="evidence" value="ECO:0007669"/>
    <property type="project" value="UniProtKB-EC"/>
</dbReference>
<dbReference type="GO" id="GO:0009813">
    <property type="term" value="P:flavonoid biosynthetic process"/>
    <property type="evidence" value="ECO:0007669"/>
    <property type="project" value="UniProtKB-UniPathway"/>
</dbReference>
<dbReference type="GO" id="GO:0030639">
    <property type="term" value="P:polyketide biosynthetic process"/>
    <property type="evidence" value="ECO:0007669"/>
    <property type="project" value="TreeGrafter"/>
</dbReference>
<dbReference type="CDD" id="cd00831">
    <property type="entry name" value="CHS_like"/>
    <property type="match status" value="1"/>
</dbReference>
<dbReference type="FunFam" id="3.40.47.10:FF:000014">
    <property type="entry name" value="Chalcone synthase 1"/>
    <property type="match status" value="1"/>
</dbReference>
<dbReference type="FunFam" id="3.40.47.10:FF:000025">
    <property type="entry name" value="Chalcone synthase 2"/>
    <property type="match status" value="1"/>
</dbReference>
<dbReference type="Gene3D" id="3.40.47.10">
    <property type="match status" value="2"/>
</dbReference>
<dbReference type="InterPro" id="IPR012328">
    <property type="entry name" value="Chalcone/stilbene_synt_C"/>
</dbReference>
<dbReference type="InterPro" id="IPR001099">
    <property type="entry name" value="Chalcone/stilbene_synt_N"/>
</dbReference>
<dbReference type="InterPro" id="IPR018088">
    <property type="entry name" value="Chalcone/stilbene_synthase_AS"/>
</dbReference>
<dbReference type="InterPro" id="IPR011141">
    <property type="entry name" value="Polyketide_synthase_type-III"/>
</dbReference>
<dbReference type="InterPro" id="IPR016039">
    <property type="entry name" value="Thiolase-like"/>
</dbReference>
<dbReference type="PANTHER" id="PTHR11877:SF62">
    <property type="entry name" value="CHALCONE SYNTHASE 7"/>
    <property type="match status" value="1"/>
</dbReference>
<dbReference type="PANTHER" id="PTHR11877">
    <property type="entry name" value="HYDROXYMETHYLGLUTARYL-COA SYNTHASE"/>
    <property type="match status" value="1"/>
</dbReference>
<dbReference type="Pfam" id="PF02797">
    <property type="entry name" value="Chal_sti_synt_C"/>
    <property type="match status" value="1"/>
</dbReference>
<dbReference type="Pfam" id="PF00195">
    <property type="entry name" value="Chal_sti_synt_N"/>
    <property type="match status" value="1"/>
</dbReference>
<dbReference type="PIRSF" id="PIRSF000451">
    <property type="entry name" value="PKS_III"/>
    <property type="match status" value="1"/>
</dbReference>
<dbReference type="SUPFAM" id="SSF53901">
    <property type="entry name" value="Thiolase-like"/>
    <property type="match status" value="2"/>
</dbReference>
<dbReference type="PROSITE" id="PS00441">
    <property type="entry name" value="CHALCONE_SYNTH"/>
    <property type="match status" value="1"/>
</dbReference>
<reference key="1">
    <citation type="journal article" date="1991" name="Chem. Pharm. Bull.">
        <title>Isolation, sequence and bacterial expression of a cDNA for chalcone synthase from the cultured cells of Pueraria lobata.</title>
        <authorList>
            <person name="Nakajima O."/>
            <person name="Akiyama T."/>
            <person name="Hakamatsuka T."/>
            <person name="Shibuya M."/>
            <person name="Noguchi H."/>
            <person name="Ebizuka Y."/>
            <person name="Sankawa U."/>
        </authorList>
    </citation>
    <scope>NUCLEOTIDE SEQUENCE</scope>
</reference>
<reference key="2">
    <citation type="journal article" date="1996" name="Biol. Pharm. Bull.">
        <title>cDNA and genomic DNA clonings of chalcone synthase from Pueraria lobata.</title>
        <authorList>
            <person name="Nakajima O."/>
            <person name="Shibuya M."/>
            <person name="Hakamatsuka T."/>
            <person name="Noguchi H."/>
            <person name="Ebizuka Y."/>
            <person name="Sankawa U."/>
        </authorList>
    </citation>
    <scope>NUCLEOTIDE SEQUENCE [GENOMIC DNA] OF 1-59</scope>
</reference>
<proteinExistence type="evidence at transcript level"/>
<organism>
    <name type="scientific">Pueraria montana var. lobata</name>
    <name type="common">Kudzu vine</name>
    <name type="synonym">Pueraria lobata</name>
    <dbReference type="NCBI Taxonomy" id="3893"/>
    <lineage>
        <taxon>Eukaryota</taxon>
        <taxon>Viridiplantae</taxon>
        <taxon>Streptophyta</taxon>
        <taxon>Embryophyta</taxon>
        <taxon>Tracheophyta</taxon>
        <taxon>Spermatophyta</taxon>
        <taxon>Magnoliopsida</taxon>
        <taxon>eudicotyledons</taxon>
        <taxon>Gunneridae</taxon>
        <taxon>Pentapetalae</taxon>
        <taxon>rosids</taxon>
        <taxon>fabids</taxon>
        <taxon>Fabales</taxon>
        <taxon>Fabaceae</taxon>
        <taxon>Papilionoideae</taxon>
        <taxon>50 kb inversion clade</taxon>
        <taxon>NPAAA clade</taxon>
        <taxon>indigoferoid/millettioid clade</taxon>
        <taxon>Phaseoleae</taxon>
        <taxon>Pueraria</taxon>
    </lineage>
</organism>